<name>Z_SABVB</name>
<comment type="function">
    <text evidence="1 2">Plays a crucial role in virion assembly and budding. Expressed late in the virus life cycle, it acts as an inhibitor of viral transcription and RNA synthesis by interacting with the viral polymerase L. Presumably recruits the NP encapsidated genome to cellular membranes at budding sites via direct interaction with NP. Plays critical roles in the final steps of viral release by interacting with host TSG101, a member of the vacuolar protein-sorting pathway and using other cellular host proteins involved in vesicle formation pathway. The budding of the virus progeny occurs after association of protein Z with the viral glycoprotein complex SSP-GP1-GP2 at the cell periphery, step that requires myristoylation of protein Z. Also selectively represses protein production by associating with host eIF4E (By similarity). In cell-based minigenome assay, has an inhibitory effect on the ribonucleoprotein machinery (vRNP), which is responsible for the replication and transcription of the viral genome (By similarity).</text>
</comment>
<comment type="subunit">
    <text evidence="2">Interacts with protein NP; this interaction probably directs the encapsidated genome to budding sites. Interacts (via RING domain) with polymerase L; this interaction inhibits viral transcription and replication, Z partially blocks the product exit tunnel for the releasing nascent RNA product. Interacts with the glycoprotein complex; this interaction plays a role in virion budding. Interacts with host eIF4E; this interaction results in eIF4E reduced affinity for its substrate, the 5'-m7 G cap structure. Interacts (via late-budding domain) with host TSG101; this interaction is essential for budding and release of viral particles. Interacts with host RPLP0; this interaction may serve to load ribosome-like particles inside the virion. Interacts with host PML; this interaction induces PML bodies redistribution in the cytoplasm upon viral infection.</text>
</comment>
<comment type="interaction">
    <interactant intactId="EBI-3647496">
        <id>Q6UY62</id>
    </interactant>
    <interactant intactId="EBI-995350">
        <id>O95786</id>
        <label>RIGI</label>
    </interactant>
    <organismsDiffer>true</organismsDiffer>
    <experiments>2</experiments>
</comment>
<comment type="subcellular location">
    <subcellularLocation>
        <location evidence="2">Virion</location>
    </subcellularLocation>
    <subcellularLocation>
        <location evidence="2">Host cytoplasm</location>
        <location evidence="2">Host perinuclear region</location>
    </subcellularLocation>
    <subcellularLocation>
        <location evidence="2">Host cell membrane</location>
        <topology evidence="2">Lipid-anchor</topology>
        <orientation evidence="2">Cytoplasmic side</orientation>
    </subcellularLocation>
    <text evidence="2">Mainly perinuclear. During budding, associates at the inner side of the plasma membrane of infected cells.</text>
</comment>
<comment type="domain">
    <text evidence="2">Late-budding domains (L domains) are short sequence motifs essential for viral particle budding. They recruit proteins of the host ESCRT machinery (Endosomal Sorting Complex Required for Transport) or ESCRT-associated proteins.</text>
</comment>
<comment type="PTM">
    <text evidence="1">Myristoylation is required for the role of RING finger protein Z in assembly and budding.</text>
</comment>
<comment type="similarity">
    <text>Belongs to the arenaviridae Z protein family.</text>
</comment>
<feature type="initiator methionine" description="Removed; by host" evidence="2">
    <location>
        <position position="1"/>
    </location>
</feature>
<feature type="chain" id="PRO_0000361040" description="RING finger protein Z" evidence="2">
    <location>
        <begin position="2"/>
        <end position="100"/>
    </location>
</feature>
<feature type="zinc finger region" description="RING-type; atypical" evidence="2">
    <location>
        <begin position="43"/>
        <end position="79"/>
    </location>
</feature>
<feature type="short sequence motif" description="PTAP/PSAP motif" evidence="2">
    <location>
        <begin position="93"/>
        <end position="96"/>
    </location>
</feature>
<feature type="lipid moiety-binding region" description="N-myristoyl glycine; by host" evidence="2">
    <location>
        <position position="2"/>
    </location>
</feature>
<reference key="1">
    <citation type="submission" date="2003-08" db="EMBL/GenBank/DDBJ databases">
        <authorList>
            <person name="Bowen M.D."/>
            <person name="Thurman K."/>
            <person name="Minor E."/>
            <person name="Meyer R.F."/>
            <person name="Malfatti S.A."/>
            <person name="Do L.H."/>
            <person name="Smith K.L."/>
            <person name="McCready P.M."/>
            <person name="Chain P.S.G."/>
        </authorList>
    </citation>
    <scope>NUCLEOTIDE SEQUENCE [GENOMIC RNA]</scope>
</reference>
<reference key="2">
    <citation type="journal article" date="2003" name="Virology">
        <title>New insights into the evolutionary relationships between arenaviruses provided by comparative analysis of small and large segment sequences.</title>
        <authorList>
            <person name="Charrel R.N."/>
            <person name="Lemasson J.J."/>
            <person name="Garbutt M."/>
            <person name="Khelifa R."/>
            <person name="De Micco P."/>
            <person name="Feldmann H."/>
            <person name="de Lamballerie X."/>
        </authorList>
    </citation>
    <scope>NUCLEOTIDE SEQUENCE [GENOMIC RNA]</scope>
</reference>
<reference key="3">
    <citation type="journal article" date="2008" name="Curr. Opin. Microbiol.">
        <title>Phylogeny of the genus Arenavirus.</title>
        <authorList>
            <person name="Charrel R.N."/>
            <person name="de Lamballerie X."/>
            <person name="Emonet S."/>
        </authorList>
    </citation>
    <scope>NUCLEOTIDE SEQUENCE [GENOMIC RNA]</scope>
</reference>
<organismHost>
    <name type="scientific">Homo sapiens</name>
    <name type="common">Human</name>
    <dbReference type="NCBI Taxonomy" id="9606"/>
</organismHost>
<proteinExistence type="evidence at protein level"/>
<accession>Q6UY62</accession>
<protein>
    <recommendedName>
        <fullName evidence="2">RING finger protein Z</fullName>
        <shortName evidence="2">Protein Z</shortName>
    </recommendedName>
    <alternativeName>
        <fullName evidence="2">Zinc-binding protein</fullName>
    </alternativeName>
</protein>
<keyword id="KW-1032">Host cell membrane</keyword>
<keyword id="KW-1035">Host cytoplasm</keyword>
<keyword id="KW-1043">Host membrane</keyword>
<keyword id="KW-0945">Host-virus interaction</keyword>
<keyword id="KW-0449">Lipoprotein</keyword>
<keyword id="KW-0472">Membrane</keyword>
<keyword id="KW-0479">Metal-binding</keyword>
<keyword id="KW-0519">Myristate</keyword>
<keyword id="KW-1198">Viral budding</keyword>
<keyword id="KW-1187">Viral budding via the host ESCRT complexes</keyword>
<keyword id="KW-1188">Viral release from host cell</keyword>
<keyword id="KW-0946">Virion</keyword>
<keyword id="KW-0862">Zinc</keyword>
<keyword id="KW-0863">Zinc-finger</keyword>
<evidence type="ECO:0000250" key="1">
    <source>
        <dbReference type="UniProtKB" id="P18541"/>
    </source>
</evidence>
<evidence type="ECO:0000255" key="2">
    <source>
        <dbReference type="HAMAP-Rule" id="MF_04087"/>
    </source>
</evidence>
<dbReference type="EMBL" id="AY358026">
    <property type="protein sequence ID" value="AAQ55262.1"/>
    <property type="molecule type" value="Genomic_RNA"/>
</dbReference>
<dbReference type="EMBL" id="AY216506">
    <property type="protein sequence ID" value="ABY59837.1"/>
    <property type="molecule type" value="Genomic_RNA"/>
</dbReference>
<dbReference type="RefSeq" id="YP_089659.1">
    <property type="nucleotide sequence ID" value="NC_006313.1"/>
</dbReference>
<dbReference type="IntAct" id="Q6UY62">
    <property type="interactions" value="1"/>
</dbReference>
<dbReference type="KEGG" id="vg:3077249"/>
<dbReference type="Proteomes" id="UP000009267">
    <property type="component" value="Genome"/>
</dbReference>
<dbReference type="GO" id="GO:0044220">
    <property type="term" value="C:host cell perinuclear region of cytoplasm"/>
    <property type="evidence" value="ECO:0007669"/>
    <property type="project" value="UniProtKB-SubCell"/>
</dbReference>
<dbReference type="GO" id="GO:0020002">
    <property type="term" value="C:host cell plasma membrane"/>
    <property type="evidence" value="ECO:0007669"/>
    <property type="project" value="UniProtKB-SubCell"/>
</dbReference>
<dbReference type="GO" id="GO:0016020">
    <property type="term" value="C:membrane"/>
    <property type="evidence" value="ECO:0007669"/>
    <property type="project" value="UniProtKB-UniRule"/>
</dbReference>
<dbReference type="GO" id="GO:0044423">
    <property type="term" value="C:virion component"/>
    <property type="evidence" value="ECO:0007669"/>
    <property type="project" value="UniProtKB-UniRule"/>
</dbReference>
<dbReference type="GO" id="GO:0003723">
    <property type="term" value="F:RNA binding"/>
    <property type="evidence" value="ECO:0007669"/>
    <property type="project" value="UniProtKB-UniRule"/>
</dbReference>
<dbReference type="GO" id="GO:0008270">
    <property type="term" value="F:zinc ion binding"/>
    <property type="evidence" value="ECO:0007669"/>
    <property type="project" value="UniProtKB-UniRule"/>
</dbReference>
<dbReference type="GO" id="GO:0046761">
    <property type="term" value="P:viral budding from plasma membrane"/>
    <property type="evidence" value="ECO:0007669"/>
    <property type="project" value="UniProtKB-UniRule"/>
</dbReference>
<dbReference type="GO" id="GO:0039702">
    <property type="term" value="P:viral budding via host ESCRT complex"/>
    <property type="evidence" value="ECO:0007669"/>
    <property type="project" value="UniProtKB-UniRule"/>
</dbReference>
<dbReference type="Gene3D" id="3.30.160.310">
    <property type="match status" value="1"/>
</dbReference>
<dbReference type="HAMAP" id="MF_04087">
    <property type="entry name" value="ARENA_Z"/>
    <property type="match status" value="1"/>
</dbReference>
<dbReference type="InterPro" id="IPR024183">
    <property type="entry name" value="RING_finger_Z_arenaviridae"/>
</dbReference>
<dbReference type="InterPro" id="IPR038485">
    <property type="entry name" value="Z_RING-type_Znf_sf"/>
</dbReference>
<dbReference type="InterPro" id="IPR003224">
    <property type="entry name" value="Z_RING_Znf"/>
</dbReference>
<dbReference type="Pfam" id="PF03854">
    <property type="entry name" value="zf-P11"/>
    <property type="match status" value="1"/>
</dbReference>
<dbReference type="PIRSF" id="PIRSF004030">
    <property type="entry name" value="Z_ArenaV"/>
    <property type="match status" value="1"/>
</dbReference>
<organism>
    <name type="scientific">Sabia mammarenavirus (isolate Human/Brasil/SPH114202/1990)</name>
    <name type="common">SABV</name>
    <name type="synonym">Sabi mammarenavirus</name>
    <dbReference type="NCBI Taxonomy" id="3052299"/>
    <lineage>
        <taxon>Viruses</taxon>
        <taxon>Riboviria</taxon>
        <taxon>Orthornavirae</taxon>
        <taxon>Negarnaviricota</taxon>
        <taxon>Polyploviricotina</taxon>
        <taxon>Ellioviricetes</taxon>
        <taxon>Bunyavirales</taxon>
        <taxon>Arenaviridae</taxon>
        <taxon>Mammarenavirus</taxon>
    </lineage>
</organism>
<sequence length="100" mass="11123">MGNSKSKSKLSANQYEQQTVNSTKQVAILKRQAEPSLYGRHNCRCCWFANTNLIKCSDHYICLKCLNIMLGKSSFCDICGEELPTSIVVPIEPSAPPPED</sequence>
<gene>
    <name evidence="2" type="primary">Z</name>
</gene>